<sequence>MVRNPMASAVESTLKTKAQTSNLSFYYGAIQALKNIHLTLAEHRVTALIGPSGCGKTTYLRCFNRMHDLYPGNRYEGQILLYPDEVNIVGPEVDPIEVRMRVSMVFQKPNPFPKSVYENVAYGLRVRGVRNRAELDEKVERALRQAALWEEVKDRLASLAFNLSGGQQQRLCIARALASEPEIILFDEPTSALDPLATLKIEELMGKLKQSITILIVTHNMQQAARISDFTAFMYLGEVIESGQTNQMFDHPTNQLTEQYVAGHFG</sequence>
<gene>
    <name evidence="1" type="primary">pstB1</name>
    <name type="ordered locus">glr0011</name>
</gene>
<organism>
    <name type="scientific">Gloeobacter violaceus (strain ATCC 29082 / PCC 7421)</name>
    <dbReference type="NCBI Taxonomy" id="251221"/>
    <lineage>
        <taxon>Bacteria</taxon>
        <taxon>Bacillati</taxon>
        <taxon>Cyanobacteriota</taxon>
        <taxon>Cyanophyceae</taxon>
        <taxon>Gloeobacterales</taxon>
        <taxon>Gloeobacteraceae</taxon>
        <taxon>Gloeobacter</taxon>
    </lineage>
</organism>
<comment type="function">
    <text evidence="1">Part of the ABC transporter complex PstSACB involved in phosphate import. Responsible for energy coupling to the transport system.</text>
</comment>
<comment type="catalytic activity">
    <reaction evidence="1">
        <text>phosphate(out) + ATP + H2O = ADP + 2 phosphate(in) + H(+)</text>
        <dbReference type="Rhea" id="RHEA:24440"/>
        <dbReference type="ChEBI" id="CHEBI:15377"/>
        <dbReference type="ChEBI" id="CHEBI:15378"/>
        <dbReference type="ChEBI" id="CHEBI:30616"/>
        <dbReference type="ChEBI" id="CHEBI:43474"/>
        <dbReference type="ChEBI" id="CHEBI:456216"/>
        <dbReference type="EC" id="7.3.2.1"/>
    </reaction>
</comment>
<comment type="subunit">
    <text evidence="1">The complex is composed of two ATP-binding proteins (PstB), two transmembrane proteins (PstC and PstA) and a solute-binding protein (PstS).</text>
</comment>
<comment type="subcellular location">
    <subcellularLocation>
        <location evidence="1">Cell inner membrane</location>
        <topology evidence="1">Peripheral membrane protein</topology>
    </subcellularLocation>
</comment>
<comment type="similarity">
    <text evidence="1">Belongs to the ABC transporter superfamily. Phosphate importer (TC 3.A.1.7) family.</text>
</comment>
<name>PSTB1_GLOVI</name>
<accession>Q7NPP4</accession>
<evidence type="ECO:0000255" key="1">
    <source>
        <dbReference type="HAMAP-Rule" id="MF_01702"/>
    </source>
</evidence>
<protein>
    <recommendedName>
        <fullName evidence="1">Phosphate import ATP-binding protein PstB 1</fullName>
        <ecNumber evidence="1">7.3.2.1</ecNumber>
    </recommendedName>
    <alternativeName>
        <fullName evidence="1">ABC phosphate transporter 1</fullName>
    </alternativeName>
    <alternativeName>
        <fullName evidence="1">Phosphate-transporting ATPase 1</fullName>
    </alternativeName>
</protein>
<dbReference type="EC" id="7.3.2.1" evidence="1"/>
<dbReference type="EMBL" id="BA000045">
    <property type="protein sequence ID" value="BAC87952.1"/>
    <property type="molecule type" value="Genomic_DNA"/>
</dbReference>
<dbReference type="RefSeq" id="NP_922957.1">
    <property type="nucleotide sequence ID" value="NC_005125.1"/>
</dbReference>
<dbReference type="SMR" id="Q7NPP4"/>
<dbReference type="FunCoup" id="Q7NPP4">
    <property type="interactions" value="110"/>
</dbReference>
<dbReference type="STRING" id="251221.gene:10757480"/>
<dbReference type="EnsemblBacteria" id="BAC87952">
    <property type="protein sequence ID" value="BAC87952"/>
    <property type="gene ID" value="BAC87952"/>
</dbReference>
<dbReference type="KEGG" id="gvi:glr0011"/>
<dbReference type="PATRIC" id="fig|251221.4.peg.11"/>
<dbReference type="eggNOG" id="COG1117">
    <property type="taxonomic scope" value="Bacteria"/>
</dbReference>
<dbReference type="HOGENOM" id="CLU_000604_1_22_3"/>
<dbReference type="InParanoid" id="Q7NPP4"/>
<dbReference type="OrthoDB" id="9802185at2"/>
<dbReference type="PhylomeDB" id="Q7NPP4"/>
<dbReference type="Proteomes" id="UP000000557">
    <property type="component" value="Chromosome"/>
</dbReference>
<dbReference type="GO" id="GO:0005886">
    <property type="term" value="C:plasma membrane"/>
    <property type="evidence" value="ECO:0007669"/>
    <property type="project" value="UniProtKB-SubCell"/>
</dbReference>
<dbReference type="GO" id="GO:0005524">
    <property type="term" value="F:ATP binding"/>
    <property type="evidence" value="ECO:0007669"/>
    <property type="project" value="UniProtKB-KW"/>
</dbReference>
<dbReference type="GO" id="GO:0016887">
    <property type="term" value="F:ATP hydrolysis activity"/>
    <property type="evidence" value="ECO:0007669"/>
    <property type="project" value="InterPro"/>
</dbReference>
<dbReference type="GO" id="GO:0015415">
    <property type="term" value="F:ATPase-coupled phosphate ion transmembrane transporter activity"/>
    <property type="evidence" value="ECO:0007669"/>
    <property type="project" value="UniProtKB-EC"/>
</dbReference>
<dbReference type="GO" id="GO:0035435">
    <property type="term" value="P:phosphate ion transmembrane transport"/>
    <property type="evidence" value="ECO:0007669"/>
    <property type="project" value="InterPro"/>
</dbReference>
<dbReference type="CDD" id="cd03260">
    <property type="entry name" value="ABC_PstB_phosphate_transporter"/>
    <property type="match status" value="1"/>
</dbReference>
<dbReference type="Gene3D" id="3.40.50.300">
    <property type="entry name" value="P-loop containing nucleotide triphosphate hydrolases"/>
    <property type="match status" value="1"/>
</dbReference>
<dbReference type="InterPro" id="IPR003593">
    <property type="entry name" value="AAA+_ATPase"/>
</dbReference>
<dbReference type="InterPro" id="IPR003439">
    <property type="entry name" value="ABC_transporter-like_ATP-bd"/>
</dbReference>
<dbReference type="InterPro" id="IPR017871">
    <property type="entry name" value="ABC_transporter-like_CS"/>
</dbReference>
<dbReference type="InterPro" id="IPR027417">
    <property type="entry name" value="P-loop_NTPase"/>
</dbReference>
<dbReference type="InterPro" id="IPR005670">
    <property type="entry name" value="PstB-like"/>
</dbReference>
<dbReference type="NCBIfam" id="TIGR00972">
    <property type="entry name" value="3a0107s01c2"/>
    <property type="match status" value="1"/>
</dbReference>
<dbReference type="PANTHER" id="PTHR43423">
    <property type="entry name" value="ABC TRANSPORTER I FAMILY MEMBER 17"/>
    <property type="match status" value="1"/>
</dbReference>
<dbReference type="PANTHER" id="PTHR43423:SF1">
    <property type="entry name" value="ABC TRANSPORTER I FAMILY MEMBER 17"/>
    <property type="match status" value="1"/>
</dbReference>
<dbReference type="Pfam" id="PF00005">
    <property type="entry name" value="ABC_tran"/>
    <property type="match status" value="1"/>
</dbReference>
<dbReference type="SMART" id="SM00382">
    <property type="entry name" value="AAA"/>
    <property type="match status" value="1"/>
</dbReference>
<dbReference type="SUPFAM" id="SSF52540">
    <property type="entry name" value="P-loop containing nucleoside triphosphate hydrolases"/>
    <property type="match status" value="1"/>
</dbReference>
<dbReference type="PROSITE" id="PS00211">
    <property type="entry name" value="ABC_TRANSPORTER_1"/>
    <property type="match status" value="1"/>
</dbReference>
<dbReference type="PROSITE" id="PS50893">
    <property type="entry name" value="ABC_TRANSPORTER_2"/>
    <property type="match status" value="1"/>
</dbReference>
<dbReference type="PROSITE" id="PS51238">
    <property type="entry name" value="PSTB"/>
    <property type="match status" value="1"/>
</dbReference>
<proteinExistence type="inferred from homology"/>
<reference key="1">
    <citation type="journal article" date="2003" name="DNA Res.">
        <title>Complete genome structure of Gloeobacter violaceus PCC 7421, a cyanobacterium that lacks thylakoids.</title>
        <authorList>
            <person name="Nakamura Y."/>
            <person name="Kaneko T."/>
            <person name="Sato S."/>
            <person name="Mimuro M."/>
            <person name="Miyashita H."/>
            <person name="Tsuchiya T."/>
            <person name="Sasamoto S."/>
            <person name="Watanabe A."/>
            <person name="Kawashima K."/>
            <person name="Kishida Y."/>
            <person name="Kiyokawa C."/>
            <person name="Kohara M."/>
            <person name="Matsumoto M."/>
            <person name="Matsuno A."/>
            <person name="Nakazaki N."/>
            <person name="Shimpo S."/>
            <person name="Takeuchi C."/>
            <person name="Yamada M."/>
            <person name="Tabata S."/>
        </authorList>
    </citation>
    <scope>NUCLEOTIDE SEQUENCE [LARGE SCALE GENOMIC DNA]</scope>
    <source>
        <strain>ATCC 29082 / PCC 7421</strain>
    </source>
</reference>
<keyword id="KW-0067">ATP-binding</keyword>
<keyword id="KW-0997">Cell inner membrane</keyword>
<keyword id="KW-1003">Cell membrane</keyword>
<keyword id="KW-0472">Membrane</keyword>
<keyword id="KW-0547">Nucleotide-binding</keyword>
<keyword id="KW-0592">Phosphate transport</keyword>
<keyword id="KW-1185">Reference proteome</keyword>
<keyword id="KW-1278">Translocase</keyword>
<keyword id="KW-0813">Transport</keyword>
<feature type="chain" id="PRO_0000092820" description="Phosphate import ATP-binding protein PstB 1">
    <location>
        <begin position="1"/>
        <end position="266"/>
    </location>
</feature>
<feature type="domain" description="ABC transporter" evidence="1">
    <location>
        <begin position="18"/>
        <end position="261"/>
    </location>
</feature>
<feature type="binding site" evidence="1">
    <location>
        <begin position="50"/>
        <end position="57"/>
    </location>
    <ligand>
        <name>ATP</name>
        <dbReference type="ChEBI" id="CHEBI:30616"/>
    </ligand>
</feature>